<comment type="function">
    <text evidence="1">Cleaves peptides in various proteins in a process that requires ATP hydrolysis. Has a chymotrypsin-like activity. Plays a major role in the degradation of misfolded proteins.</text>
</comment>
<comment type="catalytic activity">
    <reaction evidence="1">
        <text>Hydrolysis of proteins to small peptides in the presence of ATP and magnesium. alpha-casein is the usual test substrate. In the absence of ATP, only oligopeptides shorter than five residues are hydrolyzed (such as succinyl-Leu-Tyr-|-NHMec, and Leu-Tyr-Leu-|-Tyr-Trp, in which cleavage of the -Tyr-|-Leu- and -Tyr-|-Trp bonds also occurs).</text>
        <dbReference type="EC" id="3.4.21.92"/>
    </reaction>
</comment>
<comment type="subunit">
    <text evidence="1">Fourteen ClpP subunits assemble into 2 heptameric rings which stack back to back to give a disk-like structure with a central cavity, resembling the structure of eukaryotic proteasomes.</text>
</comment>
<comment type="subcellular location">
    <subcellularLocation>
        <location evidence="1">Cytoplasm</location>
    </subcellularLocation>
</comment>
<comment type="similarity">
    <text evidence="1">Belongs to the peptidase S14 family.</text>
</comment>
<reference key="1">
    <citation type="journal article" date="2010" name="Genome Biol. Evol.">
        <title>Continuing evolution of Burkholderia mallei through genome reduction and large-scale rearrangements.</title>
        <authorList>
            <person name="Losada L."/>
            <person name="Ronning C.M."/>
            <person name="DeShazer D."/>
            <person name="Woods D."/>
            <person name="Fedorova N."/>
            <person name="Kim H.S."/>
            <person name="Shabalina S.A."/>
            <person name="Pearson T.R."/>
            <person name="Brinkac L."/>
            <person name="Tan P."/>
            <person name="Nandi T."/>
            <person name="Crabtree J."/>
            <person name="Badger J."/>
            <person name="Beckstrom-Sternberg S."/>
            <person name="Saqib M."/>
            <person name="Schutzer S.E."/>
            <person name="Keim P."/>
            <person name="Nierman W.C."/>
        </authorList>
    </citation>
    <scope>NUCLEOTIDE SEQUENCE [LARGE SCALE GENOMIC DNA]</scope>
    <source>
        <strain>SAVP1</strain>
    </source>
</reference>
<evidence type="ECO:0000255" key="1">
    <source>
        <dbReference type="HAMAP-Rule" id="MF_00444"/>
    </source>
</evidence>
<feature type="chain" id="PRO_1000026072" description="ATP-dependent Clp protease proteolytic subunit">
    <location>
        <begin position="1"/>
        <end position="217"/>
    </location>
</feature>
<feature type="active site" description="Nucleophile" evidence="1">
    <location>
        <position position="121"/>
    </location>
</feature>
<feature type="active site" evidence="1">
    <location>
        <position position="146"/>
    </location>
</feature>
<dbReference type="EC" id="3.4.21.92" evidence="1"/>
<dbReference type="EMBL" id="CP000526">
    <property type="protein sequence ID" value="ABM52715.1"/>
    <property type="molecule type" value="Genomic_DNA"/>
</dbReference>
<dbReference type="RefSeq" id="WP_004193408.1">
    <property type="nucleotide sequence ID" value="NC_008785.1"/>
</dbReference>
<dbReference type="SMR" id="A1V4X1"/>
<dbReference type="MEROPS" id="S14.001"/>
<dbReference type="GeneID" id="92979196"/>
<dbReference type="KEGG" id="bmv:BMASAVP1_A1957"/>
<dbReference type="HOGENOM" id="CLU_058707_3_2_4"/>
<dbReference type="GO" id="GO:0005737">
    <property type="term" value="C:cytoplasm"/>
    <property type="evidence" value="ECO:0007669"/>
    <property type="project" value="UniProtKB-SubCell"/>
</dbReference>
<dbReference type="GO" id="GO:0009368">
    <property type="term" value="C:endopeptidase Clp complex"/>
    <property type="evidence" value="ECO:0007669"/>
    <property type="project" value="TreeGrafter"/>
</dbReference>
<dbReference type="GO" id="GO:0004176">
    <property type="term" value="F:ATP-dependent peptidase activity"/>
    <property type="evidence" value="ECO:0007669"/>
    <property type="project" value="InterPro"/>
</dbReference>
<dbReference type="GO" id="GO:0051117">
    <property type="term" value="F:ATPase binding"/>
    <property type="evidence" value="ECO:0007669"/>
    <property type="project" value="TreeGrafter"/>
</dbReference>
<dbReference type="GO" id="GO:0004252">
    <property type="term" value="F:serine-type endopeptidase activity"/>
    <property type="evidence" value="ECO:0007669"/>
    <property type="project" value="UniProtKB-UniRule"/>
</dbReference>
<dbReference type="GO" id="GO:0006515">
    <property type="term" value="P:protein quality control for misfolded or incompletely synthesized proteins"/>
    <property type="evidence" value="ECO:0007669"/>
    <property type="project" value="TreeGrafter"/>
</dbReference>
<dbReference type="CDD" id="cd07017">
    <property type="entry name" value="S14_ClpP_2"/>
    <property type="match status" value="1"/>
</dbReference>
<dbReference type="FunFam" id="3.90.226.10:FF:000001">
    <property type="entry name" value="ATP-dependent Clp protease proteolytic subunit"/>
    <property type="match status" value="1"/>
</dbReference>
<dbReference type="Gene3D" id="3.90.226.10">
    <property type="entry name" value="2-enoyl-CoA Hydratase, Chain A, domain 1"/>
    <property type="match status" value="1"/>
</dbReference>
<dbReference type="HAMAP" id="MF_00444">
    <property type="entry name" value="ClpP"/>
    <property type="match status" value="1"/>
</dbReference>
<dbReference type="InterPro" id="IPR001907">
    <property type="entry name" value="ClpP"/>
</dbReference>
<dbReference type="InterPro" id="IPR029045">
    <property type="entry name" value="ClpP/crotonase-like_dom_sf"/>
</dbReference>
<dbReference type="InterPro" id="IPR023562">
    <property type="entry name" value="ClpP/TepA"/>
</dbReference>
<dbReference type="InterPro" id="IPR033135">
    <property type="entry name" value="ClpP_His_AS"/>
</dbReference>
<dbReference type="InterPro" id="IPR018215">
    <property type="entry name" value="ClpP_Ser_AS"/>
</dbReference>
<dbReference type="NCBIfam" id="TIGR00493">
    <property type="entry name" value="clpP"/>
    <property type="match status" value="1"/>
</dbReference>
<dbReference type="NCBIfam" id="NF001368">
    <property type="entry name" value="PRK00277.1"/>
    <property type="match status" value="1"/>
</dbReference>
<dbReference type="NCBIfam" id="NF009205">
    <property type="entry name" value="PRK12553.1"/>
    <property type="match status" value="1"/>
</dbReference>
<dbReference type="PANTHER" id="PTHR10381">
    <property type="entry name" value="ATP-DEPENDENT CLP PROTEASE PROTEOLYTIC SUBUNIT"/>
    <property type="match status" value="1"/>
</dbReference>
<dbReference type="PANTHER" id="PTHR10381:SF70">
    <property type="entry name" value="ATP-DEPENDENT CLP PROTEASE PROTEOLYTIC SUBUNIT"/>
    <property type="match status" value="1"/>
</dbReference>
<dbReference type="Pfam" id="PF00574">
    <property type="entry name" value="CLP_protease"/>
    <property type="match status" value="1"/>
</dbReference>
<dbReference type="PRINTS" id="PR00127">
    <property type="entry name" value="CLPPROTEASEP"/>
</dbReference>
<dbReference type="SUPFAM" id="SSF52096">
    <property type="entry name" value="ClpP/crotonase"/>
    <property type="match status" value="1"/>
</dbReference>
<dbReference type="PROSITE" id="PS00382">
    <property type="entry name" value="CLP_PROTEASE_HIS"/>
    <property type="match status" value="1"/>
</dbReference>
<dbReference type="PROSITE" id="PS00381">
    <property type="entry name" value="CLP_PROTEASE_SER"/>
    <property type="match status" value="1"/>
</dbReference>
<organism>
    <name type="scientific">Burkholderia mallei (strain SAVP1)</name>
    <dbReference type="NCBI Taxonomy" id="320388"/>
    <lineage>
        <taxon>Bacteria</taxon>
        <taxon>Pseudomonadati</taxon>
        <taxon>Pseudomonadota</taxon>
        <taxon>Betaproteobacteria</taxon>
        <taxon>Burkholderiales</taxon>
        <taxon>Burkholderiaceae</taxon>
        <taxon>Burkholderia</taxon>
        <taxon>pseudomallei group</taxon>
    </lineage>
</organism>
<accession>A1V4X1</accession>
<keyword id="KW-0963">Cytoplasm</keyword>
<keyword id="KW-0378">Hydrolase</keyword>
<keyword id="KW-0645">Protease</keyword>
<keyword id="KW-0720">Serine protease</keyword>
<name>CLPP_BURMS</name>
<protein>
    <recommendedName>
        <fullName evidence="1">ATP-dependent Clp protease proteolytic subunit</fullName>
        <ecNumber evidence="1">3.4.21.92</ecNumber>
    </recommendedName>
    <alternativeName>
        <fullName evidence="1">Endopeptidase Clp</fullName>
    </alternativeName>
</protein>
<proteinExistence type="inferred from homology"/>
<gene>
    <name evidence="1" type="primary">clpP</name>
    <name type="ordered locus">BMASAVP1_A1957</name>
</gene>
<sequence>MINRAQLLDTLASQAPRDFEAQALGLVPIVVETSGRGERSYDIYSRLLKERIVFMVGEVNDQTANLVVAQLLFLESENPDKDISLYINSPGGSVSAGMAIYDTMQFVKPDVSTLCMGLAASMGAFLLASGAKGKRYALPNARVMIHQPLGGARGQASDIEIQAREILYLRDRLNHLLAHHTGQDVERIARDTDRDNFMSSEDAKAYGLIDHVSTKRP</sequence>